<keyword id="KW-0342">GTP-binding</keyword>
<keyword id="KW-0378">Hydrolase</keyword>
<keyword id="KW-0479">Metal-binding</keyword>
<keyword id="KW-0547">Nucleotide-binding</keyword>
<keyword id="KW-0554">One-carbon metabolism</keyword>
<keyword id="KW-0862">Zinc</keyword>
<feature type="chain" id="PRO_1000043723" description="GTP cyclohydrolase 1">
    <location>
        <begin position="1"/>
        <end position="190"/>
    </location>
</feature>
<feature type="binding site" evidence="2">
    <location>
        <position position="80"/>
    </location>
    <ligand>
        <name>Zn(2+)</name>
        <dbReference type="ChEBI" id="CHEBI:29105"/>
    </ligand>
</feature>
<feature type="binding site" evidence="2">
    <location>
        <position position="83"/>
    </location>
    <ligand>
        <name>Zn(2+)</name>
        <dbReference type="ChEBI" id="CHEBI:29105"/>
    </ligand>
</feature>
<feature type="binding site" evidence="2">
    <location>
        <position position="151"/>
    </location>
    <ligand>
        <name>Zn(2+)</name>
        <dbReference type="ChEBI" id="CHEBI:29105"/>
    </ligand>
</feature>
<accession>A8GN89</accession>
<dbReference type="EC" id="3.5.4.16" evidence="2"/>
<dbReference type="EMBL" id="CP000847">
    <property type="protein sequence ID" value="ABV74864.1"/>
    <property type="molecule type" value="Genomic_DNA"/>
</dbReference>
<dbReference type="RefSeq" id="WP_012149497.1">
    <property type="nucleotide sequence ID" value="NC_009881.1"/>
</dbReference>
<dbReference type="SMR" id="A8GN89"/>
<dbReference type="STRING" id="293614.A1C_02870"/>
<dbReference type="KEGG" id="rak:A1C_02870"/>
<dbReference type="eggNOG" id="COG0302">
    <property type="taxonomic scope" value="Bacteria"/>
</dbReference>
<dbReference type="HOGENOM" id="CLU_049768_3_1_5"/>
<dbReference type="UniPathway" id="UPA00848">
    <property type="reaction ID" value="UER00151"/>
</dbReference>
<dbReference type="Proteomes" id="UP000006830">
    <property type="component" value="Chromosome"/>
</dbReference>
<dbReference type="GO" id="GO:0005737">
    <property type="term" value="C:cytoplasm"/>
    <property type="evidence" value="ECO:0007669"/>
    <property type="project" value="TreeGrafter"/>
</dbReference>
<dbReference type="GO" id="GO:0005525">
    <property type="term" value="F:GTP binding"/>
    <property type="evidence" value="ECO:0007669"/>
    <property type="project" value="UniProtKB-KW"/>
</dbReference>
<dbReference type="GO" id="GO:0003934">
    <property type="term" value="F:GTP cyclohydrolase I activity"/>
    <property type="evidence" value="ECO:0007669"/>
    <property type="project" value="UniProtKB-UniRule"/>
</dbReference>
<dbReference type="GO" id="GO:0008270">
    <property type="term" value="F:zinc ion binding"/>
    <property type="evidence" value="ECO:0007669"/>
    <property type="project" value="UniProtKB-UniRule"/>
</dbReference>
<dbReference type="GO" id="GO:0006730">
    <property type="term" value="P:one-carbon metabolic process"/>
    <property type="evidence" value="ECO:0007669"/>
    <property type="project" value="UniProtKB-UniRule"/>
</dbReference>
<dbReference type="GO" id="GO:0006729">
    <property type="term" value="P:tetrahydrobiopterin biosynthetic process"/>
    <property type="evidence" value="ECO:0007669"/>
    <property type="project" value="TreeGrafter"/>
</dbReference>
<dbReference type="GO" id="GO:0046654">
    <property type="term" value="P:tetrahydrofolate biosynthetic process"/>
    <property type="evidence" value="ECO:0007669"/>
    <property type="project" value="UniProtKB-UniRule"/>
</dbReference>
<dbReference type="FunFam" id="1.10.286.10:FF:000001">
    <property type="entry name" value="GTP cyclohydrolase 1"/>
    <property type="match status" value="1"/>
</dbReference>
<dbReference type="FunFam" id="3.30.1130.10:FF:000001">
    <property type="entry name" value="GTP cyclohydrolase 1"/>
    <property type="match status" value="1"/>
</dbReference>
<dbReference type="Gene3D" id="1.10.286.10">
    <property type="match status" value="1"/>
</dbReference>
<dbReference type="Gene3D" id="3.30.1130.10">
    <property type="match status" value="1"/>
</dbReference>
<dbReference type="HAMAP" id="MF_00223">
    <property type="entry name" value="FolE"/>
    <property type="match status" value="1"/>
</dbReference>
<dbReference type="InterPro" id="IPR043133">
    <property type="entry name" value="GTP-CH-I_C/QueF"/>
</dbReference>
<dbReference type="InterPro" id="IPR043134">
    <property type="entry name" value="GTP-CH-I_N"/>
</dbReference>
<dbReference type="InterPro" id="IPR001474">
    <property type="entry name" value="GTP_CycHdrlase_I"/>
</dbReference>
<dbReference type="InterPro" id="IPR018234">
    <property type="entry name" value="GTP_CycHdrlase_I_CS"/>
</dbReference>
<dbReference type="InterPro" id="IPR020602">
    <property type="entry name" value="GTP_CycHdrlase_I_dom"/>
</dbReference>
<dbReference type="NCBIfam" id="TIGR00063">
    <property type="entry name" value="folE"/>
    <property type="match status" value="1"/>
</dbReference>
<dbReference type="NCBIfam" id="NF006825">
    <property type="entry name" value="PRK09347.1-2"/>
    <property type="match status" value="1"/>
</dbReference>
<dbReference type="NCBIfam" id="NF006826">
    <property type="entry name" value="PRK09347.1-3"/>
    <property type="match status" value="1"/>
</dbReference>
<dbReference type="PANTHER" id="PTHR11109:SF7">
    <property type="entry name" value="GTP CYCLOHYDROLASE 1"/>
    <property type="match status" value="1"/>
</dbReference>
<dbReference type="PANTHER" id="PTHR11109">
    <property type="entry name" value="GTP CYCLOHYDROLASE I"/>
    <property type="match status" value="1"/>
</dbReference>
<dbReference type="Pfam" id="PF01227">
    <property type="entry name" value="GTP_cyclohydroI"/>
    <property type="match status" value="1"/>
</dbReference>
<dbReference type="SUPFAM" id="SSF55620">
    <property type="entry name" value="Tetrahydrobiopterin biosynthesis enzymes-like"/>
    <property type="match status" value="1"/>
</dbReference>
<dbReference type="PROSITE" id="PS00859">
    <property type="entry name" value="GTP_CYCLOHYDROL_1_1"/>
    <property type="match status" value="1"/>
</dbReference>
<dbReference type="PROSITE" id="PS00860">
    <property type="entry name" value="GTP_CYCLOHYDROL_1_2"/>
    <property type="match status" value="1"/>
</dbReference>
<proteinExistence type="inferred from homology"/>
<evidence type="ECO:0000250" key="1"/>
<evidence type="ECO:0000255" key="2">
    <source>
        <dbReference type="HAMAP-Rule" id="MF_00223"/>
    </source>
</evidence>
<reference key="1">
    <citation type="submission" date="2007-09" db="EMBL/GenBank/DDBJ databases">
        <title>Complete genome sequence of Rickettsia akari.</title>
        <authorList>
            <person name="Madan A."/>
            <person name="Fahey J."/>
            <person name="Helton E."/>
            <person name="Ketteman M."/>
            <person name="Madan A."/>
            <person name="Rodrigues S."/>
            <person name="Sanchez A."/>
            <person name="Whiting M."/>
            <person name="Dasch G."/>
            <person name="Eremeeva M."/>
        </authorList>
    </citation>
    <scope>NUCLEOTIDE SEQUENCE [LARGE SCALE GENOMIC DNA]</scope>
    <source>
        <strain>Hartford</strain>
    </source>
</reference>
<comment type="catalytic activity">
    <reaction evidence="2">
        <text>GTP + H2O = 7,8-dihydroneopterin 3'-triphosphate + formate + H(+)</text>
        <dbReference type="Rhea" id="RHEA:17473"/>
        <dbReference type="ChEBI" id="CHEBI:15377"/>
        <dbReference type="ChEBI" id="CHEBI:15378"/>
        <dbReference type="ChEBI" id="CHEBI:15740"/>
        <dbReference type="ChEBI" id="CHEBI:37565"/>
        <dbReference type="ChEBI" id="CHEBI:58462"/>
        <dbReference type="EC" id="3.5.4.16"/>
    </reaction>
</comment>
<comment type="pathway">
    <text evidence="2">Cofactor biosynthesis; 7,8-dihydroneopterin triphosphate biosynthesis; 7,8-dihydroneopterin triphosphate from GTP: step 1/1.</text>
</comment>
<comment type="subunit">
    <text evidence="1">Toroid-shaped homodecamer, composed of two pentamers of five dimers.</text>
</comment>
<comment type="similarity">
    <text evidence="2">Belongs to the GTP cyclohydrolase I family.</text>
</comment>
<sequence length="190" mass="21754">MSKPTREEATEAVRTLLKFIGEDPTREGLLKTPDRVINSYTEIFSGYGKDVEEILNTKFYDTCNFQDFISLEGIKFTSFCEHHMLPFNGTVHIAYIPDNCIVGISKLARIVNIFAKRLQIQEKMTVQIAESVQENLKPLGVAVKIAALHSCMSMRGVMQDHSIMNTMHYTGIFAEQQKYRHEFLNLTTKR</sequence>
<name>GCH1_RICAH</name>
<organism>
    <name type="scientific">Rickettsia akari (strain Hartford)</name>
    <dbReference type="NCBI Taxonomy" id="293614"/>
    <lineage>
        <taxon>Bacteria</taxon>
        <taxon>Pseudomonadati</taxon>
        <taxon>Pseudomonadota</taxon>
        <taxon>Alphaproteobacteria</taxon>
        <taxon>Rickettsiales</taxon>
        <taxon>Rickettsiaceae</taxon>
        <taxon>Rickettsieae</taxon>
        <taxon>Rickettsia</taxon>
        <taxon>spotted fever group</taxon>
    </lineage>
</organism>
<gene>
    <name evidence="2" type="primary">folE</name>
    <name type="ordered locus">A1C_02870</name>
</gene>
<protein>
    <recommendedName>
        <fullName evidence="2">GTP cyclohydrolase 1</fullName>
        <ecNumber evidence="2">3.5.4.16</ecNumber>
    </recommendedName>
    <alternativeName>
        <fullName evidence="2">GTP cyclohydrolase I</fullName>
        <shortName evidence="2">GTP-CH-I</shortName>
    </alternativeName>
</protein>